<comment type="function">
    <text evidence="1">Uptake of L-rhamnose across the cytoplasmic membrane with the concomitant transport of protons into the cell (symport system).</text>
</comment>
<comment type="catalytic activity">
    <reaction evidence="1">
        <text>L-rhamnopyranose(in) + H(+)(in) = L-rhamnopyranose(out) + H(+)(out)</text>
        <dbReference type="Rhea" id="RHEA:29947"/>
        <dbReference type="ChEBI" id="CHEBI:15378"/>
        <dbReference type="ChEBI" id="CHEBI:62346"/>
    </reaction>
    <physiologicalReaction direction="right-to-left" evidence="1">
        <dbReference type="Rhea" id="RHEA:29949"/>
    </physiologicalReaction>
</comment>
<comment type="subcellular location">
    <subcellularLocation>
        <location evidence="1">Cell inner membrane</location>
        <topology evidence="1">Multi-pass membrane protein</topology>
    </subcellularLocation>
</comment>
<comment type="similarity">
    <text evidence="1">Belongs to the L-rhamnose transporter (TC 2.A.7.6) family.</text>
</comment>
<sequence length="344" mass="37406">MSNAITMGIFWHLIGAASAACFYAPFKQVKQWSWETMWSVGGIVSWLILPWAISALLLPDFWAYYGQFNLSTLLPVFLFGAMWGIGNINYGLTMRYLGMSMGIGIAIGITLIVGTLMTPIINGNFDVLIHTEGGRMTLLGVFVALIGVGIVTRAGQLKERKMGIKAEEFNLKKGLLLAVMCGIFSAGMSFAMNAAKPMHEAAAALGVDPLYVALPSYVVIMGGGALVNLGFCFIRLAKVQNLSIKADFSLSRPLIISNILLSALGGLMWYLQFFFYAWGHARIPAQYDYMSWMLHMSFYVLCGGLVGLVLKEWKNAGRRPVAVLSLGCVVIIIAANIVGLGMTS</sequence>
<evidence type="ECO:0000255" key="1">
    <source>
        <dbReference type="HAMAP-Rule" id="MF_01532"/>
    </source>
</evidence>
<name>RHAT_SALG2</name>
<feature type="chain" id="PRO_1000146497" description="L-rhamnose-proton symporter">
    <location>
        <begin position="1"/>
        <end position="344"/>
    </location>
</feature>
<feature type="transmembrane region" description="Helical" evidence="1">
    <location>
        <begin position="4"/>
        <end position="24"/>
    </location>
</feature>
<feature type="transmembrane region" description="Helical" evidence="1">
    <location>
        <begin position="38"/>
        <end position="58"/>
    </location>
</feature>
<feature type="transmembrane region" description="Helical" evidence="1">
    <location>
        <begin position="68"/>
        <end position="88"/>
    </location>
</feature>
<feature type="transmembrane region" description="Helical" evidence="1">
    <location>
        <begin position="101"/>
        <end position="121"/>
    </location>
</feature>
<feature type="transmembrane region" description="Helical" evidence="1">
    <location>
        <begin position="137"/>
        <end position="157"/>
    </location>
</feature>
<feature type="transmembrane region" description="Helical" evidence="1">
    <location>
        <begin position="175"/>
        <end position="195"/>
    </location>
</feature>
<feature type="transmembrane region" description="Helical" evidence="1">
    <location>
        <begin position="214"/>
        <end position="234"/>
    </location>
</feature>
<feature type="transmembrane region" description="Helical" evidence="1">
    <location>
        <begin position="259"/>
        <end position="279"/>
    </location>
</feature>
<feature type="transmembrane region" description="Helical" evidence="1">
    <location>
        <begin position="290"/>
        <end position="310"/>
    </location>
</feature>
<feature type="transmembrane region" description="Helical" evidence="1">
    <location>
        <begin position="321"/>
        <end position="341"/>
    </location>
</feature>
<gene>
    <name evidence="1" type="primary">rhaT</name>
    <name type="ordered locus">SG3371</name>
</gene>
<organism>
    <name type="scientific">Salmonella gallinarum (strain 287/91 / NCTC 13346)</name>
    <dbReference type="NCBI Taxonomy" id="550538"/>
    <lineage>
        <taxon>Bacteria</taxon>
        <taxon>Pseudomonadati</taxon>
        <taxon>Pseudomonadota</taxon>
        <taxon>Gammaproteobacteria</taxon>
        <taxon>Enterobacterales</taxon>
        <taxon>Enterobacteriaceae</taxon>
        <taxon>Salmonella</taxon>
    </lineage>
</organism>
<keyword id="KW-0997">Cell inner membrane</keyword>
<keyword id="KW-1003">Cell membrane</keyword>
<keyword id="KW-0472">Membrane</keyword>
<keyword id="KW-0762">Sugar transport</keyword>
<keyword id="KW-0769">Symport</keyword>
<keyword id="KW-0812">Transmembrane</keyword>
<keyword id="KW-1133">Transmembrane helix</keyword>
<keyword id="KW-0813">Transport</keyword>
<accession>B5RFC1</accession>
<proteinExistence type="inferred from homology"/>
<dbReference type="EMBL" id="AM933173">
    <property type="protein sequence ID" value="CAR39164.1"/>
    <property type="molecule type" value="Genomic_DNA"/>
</dbReference>
<dbReference type="RefSeq" id="WP_000063534.1">
    <property type="nucleotide sequence ID" value="NC_011274.1"/>
</dbReference>
<dbReference type="KEGG" id="seg:SG3371"/>
<dbReference type="HOGENOM" id="CLU_066437_0_0_6"/>
<dbReference type="Proteomes" id="UP000008321">
    <property type="component" value="Chromosome"/>
</dbReference>
<dbReference type="GO" id="GO:0005886">
    <property type="term" value="C:plasma membrane"/>
    <property type="evidence" value="ECO:0007669"/>
    <property type="project" value="UniProtKB-SubCell"/>
</dbReference>
<dbReference type="GO" id="GO:0015153">
    <property type="term" value="F:rhamnose transmembrane transporter activity"/>
    <property type="evidence" value="ECO:0007669"/>
    <property type="project" value="UniProtKB-UniRule"/>
</dbReference>
<dbReference type="GO" id="GO:0015293">
    <property type="term" value="F:symporter activity"/>
    <property type="evidence" value="ECO:0007669"/>
    <property type="project" value="UniProtKB-KW"/>
</dbReference>
<dbReference type="HAMAP" id="MF_01532">
    <property type="entry name" value="RhaT"/>
    <property type="match status" value="1"/>
</dbReference>
<dbReference type="InterPro" id="IPR004673">
    <property type="entry name" value="L-rhamnose-proton_sym_RhaT"/>
</dbReference>
<dbReference type="NCBIfam" id="NF010021">
    <property type="entry name" value="PRK13499.1-1"/>
    <property type="match status" value="1"/>
</dbReference>
<dbReference type="NCBIfam" id="NF010023">
    <property type="entry name" value="PRK13499.1-3"/>
    <property type="match status" value="1"/>
</dbReference>
<dbReference type="NCBIfam" id="TIGR00776">
    <property type="entry name" value="RhaT"/>
    <property type="match status" value="1"/>
</dbReference>
<dbReference type="Pfam" id="PF06379">
    <property type="entry name" value="RhaT"/>
    <property type="match status" value="1"/>
</dbReference>
<protein>
    <recommendedName>
        <fullName evidence="1">L-rhamnose-proton symporter</fullName>
    </recommendedName>
    <alternativeName>
        <fullName evidence="1">L-rhamnose-H(+) transport protein</fullName>
    </alternativeName>
</protein>
<reference key="1">
    <citation type="journal article" date="2008" name="Genome Res.">
        <title>Comparative genome analysis of Salmonella enteritidis PT4 and Salmonella gallinarum 287/91 provides insights into evolutionary and host adaptation pathways.</title>
        <authorList>
            <person name="Thomson N.R."/>
            <person name="Clayton D.J."/>
            <person name="Windhorst D."/>
            <person name="Vernikos G."/>
            <person name="Davidson S."/>
            <person name="Churcher C."/>
            <person name="Quail M.A."/>
            <person name="Stevens M."/>
            <person name="Jones M.A."/>
            <person name="Watson M."/>
            <person name="Barron A."/>
            <person name="Layton A."/>
            <person name="Pickard D."/>
            <person name="Kingsley R.A."/>
            <person name="Bignell A."/>
            <person name="Clark L."/>
            <person name="Harris B."/>
            <person name="Ormond D."/>
            <person name="Abdellah Z."/>
            <person name="Brooks K."/>
            <person name="Cherevach I."/>
            <person name="Chillingworth T."/>
            <person name="Woodward J."/>
            <person name="Norberczak H."/>
            <person name="Lord A."/>
            <person name="Arrowsmith C."/>
            <person name="Jagels K."/>
            <person name="Moule S."/>
            <person name="Mungall K."/>
            <person name="Saunders M."/>
            <person name="Whitehead S."/>
            <person name="Chabalgoity J.A."/>
            <person name="Maskell D."/>
            <person name="Humphreys T."/>
            <person name="Roberts M."/>
            <person name="Barrow P.A."/>
            <person name="Dougan G."/>
            <person name="Parkhill J."/>
        </authorList>
    </citation>
    <scope>NUCLEOTIDE SEQUENCE [LARGE SCALE GENOMIC DNA]</scope>
    <source>
        <strain>287/91 / NCTC 13346</strain>
    </source>
</reference>